<feature type="chain" id="PRO_0000334309" description="Na(+)/H(+) antiporter NhaA">
    <location>
        <begin position="1"/>
        <end position="403"/>
    </location>
</feature>
<feature type="transmembrane region" description="Helical" evidence="1">
    <location>
        <begin position="23"/>
        <end position="43"/>
    </location>
</feature>
<feature type="transmembrane region" description="Helical" evidence="1">
    <location>
        <begin position="66"/>
        <end position="86"/>
    </location>
</feature>
<feature type="transmembrane region" description="Helical" evidence="1">
    <location>
        <begin position="101"/>
        <end position="121"/>
    </location>
</feature>
<feature type="transmembrane region" description="Helical" evidence="1">
    <location>
        <begin position="132"/>
        <end position="152"/>
    </location>
</feature>
<feature type="transmembrane region" description="Helical" evidence="1">
    <location>
        <begin position="161"/>
        <end position="181"/>
    </location>
</feature>
<feature type="transmembrane region" description="Helical" evidence="1">
    <location>
        <begin position="184"/>
        <end position="204"/>
    </location>
</feature>
<feature type="transmembrane region" description="Helical" evidence="1">
    <location>
        <begin position="219"/>
        <end position="239"/>
    </location>
</feature>
<feature type="transmembrane region" description="Helical" evidence="1">
    <location>
        <begin position="257"/>
        <end position="277"/>
    </location>
</feature>
<feature type="transmembrane region" description="Helical" evidence="1">
    <location>
        <begin position="297"/>
        <end position="317"/>
    </location>
</feature>
<feature type="transmembrane region" description="Helical" evidence="1">
    <location>
        <begin position="333"/>
        <end position="353"/>
    </location>
</feature>
<feature type="transmembrane region" description="Helical" evidence="1">
    <location>
        <begin position="363"/>
        <end position="383"/>
    </location>
</feature>
<accession>Q5FNE6</accession>
<accession>Q5FNE5</accession>
<gene>
    <name evidence="1" type="primary">nhaA</name>
    <name type="ordered locus">GOX2369/GOX2370</name>
</gene>
<evidence type="ECO:0000255" key="1">
    <source>
        <dbReference type="HAMAP-Rule" id="MF_01844"/>
    </source>
</evidence>
<evidence type="ECO:0000305" key="2"/>
<proteinExistence type="inferred from homology"/>
<reference key="1">
    <citation type="journal article" date="2005" name="Nat. Biotechnol.">
        <title>Complete genome sequence of the acetic acid bacterium Gluconobacter oxydans.</title>
        <authorList>
            <person name="Prust C."/>
            <person name="Hoffmeister M."/>
            <person name="Liesegang H."/>
            <person name="Wiezer A."/>
            <person name="Fricke W.F."/>
            <person name="Ehrenreich A."/>
            <person name="Gottschalk G."/>
            <person name="Deppenmeier U."/>
        </authorList>
    </citation>
    <scope>NUCLEOTIDE SEQUENCE [LARGE SCALE GENOMIC DNA]</scope>
    <source>
        <strain>621H</strain>
    </source>
</reference>
<organism>
    <name type="scientific">Gluconobacter oxydans (strain 621H)</name>
    <name type="common">Gluconobacter suboxydans</name>
    <dbReference type="NCBI Taxonomy" id="290633"/>
    <lineage>
        <taxon>Bacteria</taxon>
        <taxon>Pseudomonadati</taxon>
        <taxon>Pseudomonadota</taxon>
        <taxon>Alphaproteobacteria</taxon>
        <taxon>Acetobacterales</taxon>
        <taxon>Acetobacteraceae</taxon>
        <taxon>Gluconobacter</taxon>
    </lineage>
</organism>
<comment type="function">
    <text evidence="1">Na(+)/H(+) antiporter that extrudes sodium in exchange for external protons.</text>
</comment>
<comment type="catalytic activity">
    <reaction evidence="1">
        <text>Na(+)(in) + 2 H(+)(out) = Na(+)(out) + 2 H(+)(in)</text>
        <dbReference type="Rhea" id="RHEA:29251"/>
        <dbReference type="ChEBI" id="CHEBI:15378"/>
        <dbReference type="ChEBI" id="CHEBI:29101"/>
    </reaction>
    <physiologicalReaction direction="left-to-right" evidence="1">
        <dbReference type="Rhea" id="RHEA:29252"/>
    </physiologicalReaction>
</comment>
<comment type="subcellular location">
    <subcellularLocation>
        <location evidence="1">Cell inner membrane</location>
        <topology evidence="1">Multi-pass membrane protein</topology>
    </subcellularLocation>
</comment>
<comment type="similarity">
    <text evidence="1">Belongs to the NhaA Na(+)/H(+) (TC 2.A.33) antiporter family.</text>
</comment>
<comment type="sequence caution" evidence="2">
    <conflict type="frameshift">
        <sequence resource="EMBL-CDS" id="AAW62101"/>
    </conflict>
</comment>
<comment type="sequence caution" evidence="2">
    <conflict type="frameshift">
        <sequence resource="EMBL-CDS" id="AAW62102"/>
    </conflict>
</comment>
<name>NHAA_GLUOX</name>
<keyword id="KW-0050">Antiport</keyword>
<keyword id="KW-0997">Cell inner membrane</keyword>
<keyword id="KW-1003">Cell membrane</keyword>
<keyword id="KW-0406">Ion transport</keyword>
<keyword id="KW-0472">Membrane</keyword>
<keyword id="KW-1185">Reference proteome</keyword>
<keyword id="KW-0915">Sodium</keyword>
<keyword id="KW-0739">Sodium transport</keyword>
<keyword id="KW-0812">Transmembrane</keyword>
<keyword id="KW-1133">Transmembrane helix</keyword>
<keyword id="KW-0813">Transport</keyword>
<dbReference type="EMBL" id="CP000009">
    <property type="protein sequence ID" value="AAW62101.1"/>
    <property type="status" value="ALT_FRAME"/>
    <property type="molecule type" value="Genomic_DNA"/>
</dbReference>
<dbReference type="EMBL" id="CP000009">
    <property type="protein sequence ID" value="AAW62102.1"/>
    <property type="status" value="ALT_FRAME"/>
    <property type="molecule type" value="Genomic_DNA"/>
</dbReference>
<dbReference type="SMR" id="Q5FNE6"/>
<dbReference type="STRING" id="290633.GOX2369"/>
<dbReference type="KEGG" id="gox:GOX2369"/>
<dbReference type="KEGG" id="gox:GOX2370"/>
<dbReference type="eggNOG" id="COG3004">
    <property type="taxonomic scope" value="Bacteria"/>
</dbReference>
<dbReference type="HOGENOM" id="CLU_015803_2_0_5"/>
<dbReference type="Proteomes" id="UP000006375">
    <property type="component" value="Chromosome"/>
</dbReference>
<dbReference type="GO" id="GO:0005886">
    <property type="term" value="C:plasma membrane"/>
    <property type="evidence" value="ECO:0007669"/>
    <property type="project" value="UniProtKB-SubCell"/>
</dbReference>
<dbReference type="GO" id="GO:0015385">
    <property type="term" value="F:sodium:proton antiporter activity"/>
    <property type="evidence" value="ECO:0007669"/>
    <property type="project" value="TreeGrafter"/>
</dbReference>
<dbReference type="GO" id="GO:0006885">
    <property type="term" value="P:regulation of pH"/>
    <property type="evidence" value="ECO:0007669"/>
    <property type="project" value="InterPro"/>
</dbReference>
<dbReference type="Gene3D" id="1.20.1530.10">
    <property type="entry name" value="Na+/H+ antiporter like domain"/>
    <property type="match status" value="1"/>
</dbReference>
<dbReference type="HAMAP" id="MF_01844">
    <property type="entry name" value="NhaA"/>
    <property type="match status" value="1"/>
</dbReference>
<dbReference type="InterPro" id="IPR023171">
    <property type="entry name" value="Na/H_antiporter_dom_sf"/>
</dbReference>
<dbReference type="InterPro" id="IPR004670">
    <property type="entry name" value="NhaA"/>
</dbReference>
<dbReference type="NCBIfam" id="TIGR00773">
    <property type="entry name" value="NhaA"/>
    <property type="match status" value="1"/>
</dbReference>
<dbReference type="PANTHER" id="PTHR30341:SF0">
    <property type="entry name" value="NA(+)_H(+) ANTIPORTER NHAA"/>
    <property type="match status" value="1"/>
</dbReference>
<dbReference type="PANTHER" id="PTHR30341">
    <property type="entry name" value="SODIUM ION/PROTON ANTIPORTER NHAA-RELATED"/>
    <property type="match status" value="1"/>
</dbReference>
<dbReference type="Pfam" id="PF06965">
    <property type="entry name" value="Na_H_antiport_1"/>
    <property type="match status" value="1"/>
</dbReference>
<protein>
    <recommendedName>
        <fullName evidence="1">Na(+)/H(+) antiporter NhaA</fullName>
    </recommendedName>
    <alternativeName>
        <fullName evidence="1">Sodium/proton antiporter NhaA</fullName>
    </alternativeName>
</protein>
<sequence>MTAPFVPAAAHVRRFLKSSAGGAFFLLLASLAGFVLANSPWAAGYRTLTTLPLKFPFLGKRGPDNVAAWVSDGLMTLFFLVVILEIKKEIVSGHLSSLRRVALPLIGAVGGMVVPALTYLLVTWGHPEATSGWAIPVATDAAFTLPIILALGRRVSPGARAWLMALAIFDDVLGIVVIALFYGGSMYWPALLAVVLVTAALIGANRGRIRTLWAYGTGGILLWTALLDSGLHPTLAGVITGLCLPAGDAKGAATLDWVSSAVTPLVTWIVLPLFGFMNVGMSAAGMKPDMMLEAVPLGIMLGLMLGKPVGVFGATLLSIRLKVVMLPAGTSTGMLFGLSLLCGIGFTISLFVANLAFSGSDLIAPAKMGIFAGSALSALTGWFWLRFMPQNVTRPSEEGGFPR</sequence>